<keyword id="KW-1003">Cell membrane</keyword>
<keyword id="KW-0472">Membrane</keyword>
<keyword id="KW-1185">Reference proteome</keyword>
<keyword id="KW-0812">Transmembrane</keyword>
<keyword id="KW-1133">Transmembrane helix</keyword>
<proteinExistence type="predicted"/>
<evidence type="ECO:0000255" key="1"/>
<evidence type="ECO:0000305" key="2"/>
<organism>
    <name type="scientific">Bacillus subtilis (strain 168)</name>
    <dbReference type="NCBI Taxonomy" id="224308"/>
    <lineage>
        <taxon>Bacteria</taxon>
        <taxon>Bacillati</taxon>
        <taxon>Bacillota</taxon>
        <taxon>Bacilli</taxon>
        <taxon>Bacillales</taxon>
        <taxon>Bacillaceae</taxon>
        <taxon>Bacillus</taxon>
    </lineage>
</organism>
<name>YYZG_BACSU</name>
<accession>C0H3U0</accession>
<gene>
    <name type="primary">yyzG</name>
    <name type="ordered locus">BSU40259</name>
</gene>
<dbReference type="EMBL" id="AL009126">
    <property type="protein sequence ID" value="CAX52716.1"/>
    <property type="molecule type" value="Genomic_DNA"/>
</dbReference>
<dbReference type="RefSeq" id="WP_003244248.1">
    <property type="nucleotide sequence ID" value="NZ_OZ025638.1"/>
</dbReference>
<dbReference type="RefSeq" id="YP_003097801.1">
    <property type="nucleotide sequence ID" value="NC_000964.3"/>
</dbReference>
<dbReference type="SMR" id="C0H3U0"/>
<dbReference type="STRING" id="224308.BSU40259"/>
<dbReference type="PaxDb" id="224308-BSU40259"/>
<dbReference type="EnsemblBacteria" id="CAX52716">
    <property type="protein sequence ID" value="CAX52716"/>
    <property type="gene ID" value="BSU_40259"/>
</dbReference>
<dbReference type="GeneID" id="8303112"/>
<dbReference type="KEGG" id="bsu:BSU40259"/>
<dbReference type="PATRIC" id="fig|224308.179.peg.4355"/>
<dbReference type="InParanoid" id="C0H3U0"/>
<dbReference type="OrthoDB" id="2909634at2"/>
<dbReference type="BioCyc" id="BSUB:BSU40259-MONOMER"/>
<dbReference type="Proteomes" id="UP000001570">
    <property type="component" value="Chromosome"/>
</dbReference>
<dbReference type="GO" id="GO:0005886">
    <property type="term" value="C:plasma membrane"/>
    <property type="evidence" value="ECO:0007669"/>
    <property type="project" value="UniProtKB-SubCell"/>
</dbReference>
<feature type="chain" id="PRO_0000379108" description="Uncharacterized membrane protein YyzG">
    <location>
        <begin position="1"/>
        <end position="56"/>
    </location>
</feature>
<feature type="transmembrane region" description="Helical" evidence="1">
    <location>
        <begin position="6"/>
        <end position="26"/>
    </location>
</feature>
<feature type="transmembrane region" description="Helical" evidence="1">
    <location>
        <begin position="29"/>
        <end position="49"/>
    </location>
</feature>
<comment type="subcellular location">
    <subcellularLocation>
        <location evidence="2">Cell membrane</location>
        <topology evidence="2">Multi-pass membrane protein</topology>
    </subcellularLocation>
</comment>
<reference key="1">
    <citation type="journal article" date="1997" name="Nature">
        <title>The complete genome sequence of the Gram-positive bacterium Bacillus subtilis.</title>
        <authorList>
            <person name="Kunst F."/>
            <person name="Ogasawara N."/>
            <person name="Moszer I."/>
            <person name="Albertini A.M."/>
            <person name="Alloni G."/>
            <person name="Azevedo V."/>
            <person name="Bertero M.G."/>
            <person name="Bessieres P."/>
            <person name="Bolotin A."/>
            <person name="Borchert S."/>
            <person name="Borriss R."/>
            <person name="Boursier L."/>
            <person name="Brans A."/>
            <person name="Braun M."/>
            <person name="Brignell S.C."/>
            <person name="Bron S."/>
            <person name="Brouillet S."/>
            <person name="Bruschi C.V."/>
            <person name="Caldwell B."/>
            <person name="Capuano V."/>
            <person name="Carter N.M."/>
            <person name="Choi S.-K."/>
            <person name="Codani J.-J."/>
            <person name="Connerton I.F."/>
            <person name="Cummings N.J."/>
            <person name="Daniel R.A."/>
            <person name="Denizot F."/>
            <person name="Devine K.M."/>
            <person name="Duesterhoeft A."/>
            <person name="Ehrlich S.D."/>
            <person name="Emmerson P.T."/>
            <person name="Entian K.-D."/>
            <person name="Errington J."/>
            <person name="Fabret C."/>
            <person name="Ferrari E."/>
            <person name="Foulger D."/>
            <person name="Fritz C."/>
            <person name="Fujita M."/>
            <person name="Fujita Y."/>
            <person name="Fuma S."/>
            <person name="Galizzi A."/>
            <person name="Galleron N."/>
            <person name="Ghim S.-Y."/>
            <person name="Glaser P."/>
            <person name="Goffeau A."/>
            <person name="Golightly E.J."/>
            <person name="Grandi G."/>
            <person name="Guiseppi G."/>
            <person name="Guy B.J."/>
            <person name="Haga K."/>
            <person name="Haiech J."/>
            <person name="Harwood C.R."/>
            <person name="Henaut A."/>
            <person name="Hilbert H."/>
            <person name="Holsappel S."/>
            <person name="Hosono S."/>
            <person name="Hullo M.-F."/>
            <person name="Itaya M."/>
            <person name="Jones L.-M."/>
            <person name="Joris B."/>
            <person name="Karamata D."/>
            <person name="Kasahara Y."/>
            <person name="Klaerr-Blanchard M."/>
            <person name="Klein C."/>
            <person name="Kobayashi Y."/>
            <person name="Koetter P."/>
            <person name="Koningstein G."/>
            <person name="Krogh S."/>
            <person name="Kumano M."/>
            <person name="Kurita K."/>
            <person name="Lapidus A."/>
            <person name="Lardinois S."/>
            <person name="Lauber J."/>
            <person name="Lazarevic V."/>
            <person name="Lee S.-M."/>
            <person name="Levine A."/>
            <person name="Liu H."/>
            <person name="Masuda S."/>
            <person name="Mauel C."/>
            <person name="Medigue C."/>
            <person name="Medina N."/>
            <person name="Mellado R.P."/>
            <person name="Mizuno M."/>
            <person name="Moestl D."/>
            <person name="Nakai S."/>
            <person name="Noback M."/>
            <person name="Noone D."/>
            <person name="O'Reilly M."/>
            <person name="Ogawa K."/>
            <person name="Ogiwara A."/>
            <person name="Oudega B."/>
            <person name="Park S.-H."/>
            <person name="Parro V."/>
            <person name="Pohl T.M."/>
            <person name="Portetelle D."/>
            <person name="Porwollik S."/>
            <person name="Prescott A.M."/>
            <person name="Presecan E."/>
            <person name="Pujic P."/>
            <person name="Purnelle B."/>
            <person name="Rapoport G."/>
            <person name="Rey M."/>
            <person name="Reynolds S."/>
            <person name="Rieger M."/>
            <person name="Rivolta C."/>
            <person name="Rocha E."/>
            <person name="Roche B."/>
            <person name="Rose M."/>
            <person name="Sadaie Y."/>
            <person name="Sato T."/>
            <person name="Scanlan E."/>
            <person name="Schleich S."/>
            <person name="Schroeter R."/>
            <person name="Scoffone F."/>
            <person name="Sekiguchi J."/>
            <person name="Sekowska A."/>
            <person name="Seror S.J."/>
            <person name="Serror P."/>
            <person name="Shin B.-S."/>
            <person name="Soldo B."/>
            <person name="Sorokin A."/>
            <person name="Tacconi E."/>
            <person name="Takagi T."/>
            <person name="Takahashi H."/>
            <person name="Takemaru K."/>
            <person name="Takeuchi M."/>
            <person name="Tamakoshi A."/>
            <person name="Tanaka T."/>
            <person name="Terpstra P."/>
            <person name="Tognoni A."/>
            <person name="Tosato V."/>
            <person name="Uchiyama S."/>
            <person name="Vandenbol M."/>
            <person name="Vannier F."/>
            <person name="Vassarotti A."/>
            <person name="Viari A."/>
            <person name="Wambutt R."/>
            <person name="Wedler E."/>
            <person name="Wedler H."/>
            <person name="Weitzenegger T."/>
            <person name="Winters P."/>
            <person name="Wipat A."/>
            <person name="Yamamoto H."/>
            <person name="Yamane K."/>
            <person name="Yasumoto K."/>
            <person name="Yata K."/>
            <person name="Yoshida K."/>
            <person name="Yoshikawa H.-F."/>
            <person name="Zumstein E."/>
            <person name="Yoshikawa H."/>
            <person name="Danchin A."/>
        </authorList>
    </citation>
    <scope>NUCLEOTIDE SEQUENCE [LARGE SCALE GENOMIC DNA]</scope>
    <source>
        <strain>168</strain>
    </source>
</reference>
<protein>
    <recommendedName>
        <fullName>Uncharacterized membrane protein YyzG</fullName>
    </recommendedName>
</protein>
<sequence length="56" mass="6114">MQTNRVILLAVMICLVSAITVFLLNGCKVDFLDIGGTIIGCFLGIFVVVRIQKKQS</sequence>